<protein>
    <recommendedName>
        <fullName>Mannan endo-1,4-beta-mannosidase 3</fullName>
        <ecNumber>3.2.1.78</ecNumber>
    </recommendedName>
    <alternativeName>
        <fullName>Beta-mannanase 3</fullName>
    </alternativeName>
    <alternativeName>
        <fullName>Endo-beta-1,4-mannanase 3</fullName>
        <shortName>AtMAN3</shortName>
    </alternativeName>
</protein>
<dbReference type="EC" id="3.2.1.78"/>
<dbReference type="EMBL" id="AC011708">
    <property type="protein sequence ID" value="AAF19560.1"/>
    <property type="molecule type" value="Genomic_DNA"/>
</dbReference>
<dbReference type="EMBL" id="CP002686">
    <property type="protein sequence ID" value="AEE74967.1"/>
    <property type="molecule type" value="Genomic_DNA"/>
</dbReference>
<dbReference type="RefSeq" id="NP_187700.1">
    <property type="nucleotide sequence ID" value="NM_111926.2"/>
</dbReference>
<dbReference type="SMR" id="Q9SG94"/>
<dbReference type="FunCoup" id="Q9SG94">
    <property type="interactions" value="62"/>
</dbReference>
<dbReference type="STRING" id="3702.Q9SG94"/>
<dbReference type="CAZy" id="GH5">
    <property type="family name" value="Glycoside Hydrolase Family 5"/>
</dbReference>
<dbReference type="GlyCosmos" id="Q9SG94">
    <property type="glycosylation" value="6 sites, No reported glycans"/>
</dbReference>
<dbReference type="GlyGen" id="Q9SG94">
    <property type="glycosylation" value="6 sites"/>
</dbReference>
<dbReference type="PaxDb" id="3702-AT3G10890.1"/>
<dbReference type="ProteomicsDB" id="238234"/>
<dbReference type="EnsemblPlants" id="AT3G10890.1">
    <property type="protein sequence ID" value="AT3G10890.1"/>
    <property type="gene ID" value="AT3G10890"/>
</dbReference>
<dbReference type="GeneID" id="820259"/>
<dbReference type="Gramene" id="AT3G10890.1">
    <property type="protein sequence ID" value="AT3G10890.1"/>
    <property type="gene ID" value="AT3G10890"/>
</dbReference>
<dbReference type="KEGG" id="ath:AT3G10890"/>
<dbReference type="Araport" id="AT3G10890"/>
<dbReference type="TAIR" id="AT3G10890">
    <property type="gene designation" value="MAN3"/>
</dbReference>
<dbReference type="eggNOG" id="ENOG502QS4Q">
    <property type="taxonomic scope" value="Eukaryota"/>
</dbReference>
<dbReference type="HOGENOM" id="CLU_031603_0_0_1"/>
<dbReference type="InParanoid" id="Q9SG94"/>
<dbReference type="OMA" id="FWHVISD"/>
<dbReference type="PhylomeDB" id="Q9SG94"/>
<dbReference type="BioCyc" id="ARA:AT3G10890-MONOMER"/>
<dbReference type="PRO" id="PR:Q9SG94"/>
<dbReference type="Proteomes" id="UP000006548">
    <property type="component" value="Chromosome 3"/>
</dbReference>
<dbReference type="ExpressionAtlas" id="Q9SG94">
    <property type="expression patterns" value="baseline and differential"/>
</dbReference>
<dbReference type="GO" id="GO:0048046">
    <property type="term" value="C:apoplast"/>
    <property type="evidence" value="ECO:0000314"/>
    <property type="project" value="TAIR"/>
</dbReference>
<dbReference type="GO" id="GO:0016985">
    <property type="term" value="F:mannan endo-1,4-beta-mannosidase activity"/>
    <property type="evidence" value="ECO:0000314"/>
    <property type="project" value="TAIR"/>
</dbReference>
<dbReference type="GO" id="GO:0071585">
    <property type="term" value="P:detoxification of cadmium ion"/>
    <property type="evidence" value="ECO:0000315"/>
    <property type="project" value="TAIR"/>
</dbReference>
<dbReference type="GO" id="GO:0000272">
    <property type="term" value="P:polysaccharide catabolic process"/>
    <property type="evidence" value="ECO:0007669"/>
    <property type="project" value="InterPro"/>
</dbReference>
<dbReference type="GO" id="GO:0046686">
    <property type="term" value="P:response to cadmium ion"/>
    <property type="evidence" value="ECO:0000315"/>
    <property type="project" value="TAIR"/>
</dbReference>
<dbReference type="FunFam" id="3.20.20.80:FF:000012">
    <property type="entry name" value="Mannan endo-1,4-beta-mannosidase 6"/>
    <property type="match status" value="1"/>
</dbReference>
<dbReference type="Gene3D" id="3.20.20.80">
    <property type="entry name" value="Glycosidases"/>
    <property type="match status" value="1"/>
</dbReference>
<dbReference type="InterPro" id="IPR001547">
    <property type="entry name" value="Glyco_hydro_5"/>
</dbReference>
<dbReference type="InterPro" id="IPR017853">
    <property type="entry name" value="Glycoside_hydrolase_SF"/>
</dbReference>
<dbReference type="InterPro" id="IPR045053">
    <property type="entry name" value="MAN-like"/>
</dbReference>
<dbReference type="PANTHER" id="PTHR31451">
    <property type="match status" value="1"/>
</dbReference>
<dbReference type="PANTHER" id="PTHR31451:SF42">
    <property type="entry name" value="MANNAN ENDO-1,4-BETA-MANNOSIDASE 3-RELATED"/>
    <property type="match status" value="1"/>
</dbReference>
<dbReference type="Pfam" id="PF00150">
    <property type="entry name" value="Cellulase"/>
    <property type="match status" value="1"/>
</dbReference>
<dbReference type="SUPFAM" id="SSF51445">
    <property type="entry name" value="(Trans)glycosidases"/>
    <property type="match status" value="1"/>
</dbReference>
<keyword id="KW-0325">Glycoprotein</keyword>
<keyword id="KW-0326">Glycosidase</keyword>
<keyword id="KW-0378">Hydrolase</keyword>
<keyword id="KW-1185">Reference proteome</keyword>
<keyword id="KW-0964">Secreted</keyword>
<keyword id="KW-0732">Signal</keyword>
<proteinExistence type="evidence at transcript level"/>
<comment type="catalytic activity">
    <reaction>
        <text>Random hydrolysis of (1-&gt;4)-beta-D-mannosidic linkages in mannans, galactomannans and glucomannans.</text>
        <dbReference type="EC" id="3.2.1.78"/>
    </reaction>
</comment>
<comment type="subcellular location">
    <subcellularLocation>
        <location evidence="5">Secreted</location>
    </subcellularLocation>
</comment>
<comment type="tissue specificity">
    <text evidence="4">Expressed in leaves, flowers, siliques and seeds.</text>
</comment>
<comment type="similarity">
    <text evidence="5">Belongs to the glycosyl hydrolase 5 (cellulase A) family.</text>
</comment>
<gene>
    <name type="primary">MAN3</name>
    <name type="ordered locus">At3g10890</name>
    <name type="ORF">T7M13.3</name>
</gene>
<feature type="signal peptide" evidence="3">
    <location>
        <begin position="1"/>
        <end position="19"/>
    </location>
</feature>
<feature type="chain" id="PRO_0000277476" description="Mannan endo-1,4-beta-mannosidase 3">
    <location>
        <begin position="20"/>
        <end position="414"/>
    </location>
</feature>
<feature type="active site" description="Proton donor" evidence="2">
    <location>
        <position position="203"/>
    </location>
</feature>
<feature type="active site" description="Nucleophile" evidence="2">
    <location>
        <position position="323"/>
    </location>
</feature>
<feature type="binding site" evidence="1">
    <location>
        <position position="87"/>
    </location>
    <ligand>
        <name>substrate</name>
    </ligand>
</feature>
<feature type="binding site" evidence="1">
    <location>
        <position position="202"/>
    </location>
    <ligand>
        <name>substrate</name>
    </ligand>
</feature>
<feature type="binding site" evidence="1">
    <location>
        <position position="283"/>
    </location>
    <ligand>
        <name>substrate</name>
    </ligand>
</feature>
<feature type="binding site" evidence="1">
    <location>
        <position position="365"/>
    </location>
    <ligand>
        <name>substrate</name>
    </ligand>
</feature>
<feature type="glycosylation site" description="N-linked (GlcNAc...) asparagine" evidence="3">
    <location>
        <position position="17"/>
    </location>
</feature>
<feature type="glycosylation site" description="N-linked (GlcNAc...) asparagine" evidence="3">
    <location>
        <position position="75"/>
    </location>
</feature>
<feature type="glycosylation site" description="N-linked (GlcNAc...) asparagine" evidence="3">
    <location>
        <position position="133"/>
    </location>
</feature>
<feature type="glycosylation site" description="N-linked (GlcNAc...) asparagine" evidence="3">
    <location>
        <position position="153"/>
    </location>
</feature>
<feature type="glycosylation site" description="N-linked (GlcNAc...) asparagine" evidence="3">
    <location>
        <position position="343"/>
    </location>
</feature>
<feature type="glycosylation site" description="N-linked (GlcNAc...) asparagine" evidence="3">
    <location>
        <position position="386"/>
    </location>
</feature>
<sequence>MKCLCFVVLLAILIAQNSSDLGVKSASSDGFVSRKGVQFILNGKPFYANGFNAYWLAYEATDSTTRFKITYVFQNATIHDLTIVRTWGFRDGGYRALQIAPGVYDEKTFQGLDFAIAEAKRLGIKMIITFVNNYSDFGGRKQYVDWAKNTGQNVSSDDDFYTNPLVKQYYKNHVKTMVNRVNTFTKVEYKDEPTIMGWELMNEPQCRADPSGKTLTAWMNEMALYVKSVDSKHLLSTGLEGFYGDSSPQRKTSLNPVAANVLGTDFIANHKLDAIDFASIHSYPDLWFPNLDEKSRLNLLRKWLECHLEDAQNILKKPLILGEFGKPTNTPGYTQAQRDAVFNATFDTIYESAEKGGPAAGALFWHVISDGMNNFKDPLSIVLSENSTTVNIITEESRKLGLIRGKGKLSKTKI</sequence>
<evidence type="ECO:0000250" key="1">
    <source>
        <dbReference type="UniProtKB" id="B4XC07"/>
    </source>
</evidence>
<evidence type="ECO:0000250" key="2">
    <source>
        <dbReference type="UniProtKB" id="Q99036"/>
    </source>
</evidence>
<evidence type="ECO:0000255" key="3"/>
<evidence type="ECO:0000269" key="4">
    <source>
    </source>
</evidence>
<evidence type="ECO:0000305" key="5"/>
<name>MAN3_ARATH</name>
<accession>Q9SG94</accession>
<reference key="1">
    <citation type="journal article" date="2000" name="Nature">
        <title>Sequence and analysis of chromosome 3 of the plant Arabidopsis thaliana.</title>
        <authorList>
            <person name="Salanoubat M."/>
            <person name="Lemcke K."/>
            <person name="Rieger M."/>
            <person name="Ansorge W."/>
            <person name="Unseld M."/>
            <person name="Fartmann B."/>
            <person name="Valle G."/>
            <person name="Bloecker H."/>
            <person name="Perez-Alonso M."/>
            <person name="Obermaier B."/>
            <person name="Delseny M."/>
            <person name="Boutry M."/>
            <person name="Grivell L.A."/>
            <person name="Mache R."/>
            <person name="Puigdomenech P."/>
            <person name="De Simone V."/>
            <person name="Choisne N."/>
            <person name="Artiguenave F."/>
            <person name="Robert C."/>
            <person name="Brottier P."/>
            <person name="Wincker P."/>
            <person name="Cattolico L."/>
            <person name="Weissenbach J."/>
            <person name="Saurin W."/>
            <person name="Quetier F."/>
            <person name="Schaefer M."/>
            <person name="Mueller-Auer S."/>
            <person name="Gabel C."/>
            <person name="Fuchs M."/>
            <person name="Benes V."/>
            <person name="Wurmbach E."/>
            <person name="Drzonek H."/>
            <person name="Erfle H."/>
            <person name="Jordan N."/>
            <person name="Bangert S."/>
            <person name="Wiedelmann R."/>
            <person name="Kranz H."/>
            <person name="Voss H."/>
            <person name="Holland R."/>
            <person name="Brandt P."/>
            <person name="Nyakatura G."/>
            <person name="Vezzi A."/>
            <person name="D'Angelo M."/>
            <person name="Pallavicini A."/>
            <person name="Toppo S."/>
            <person name="Simionati B."/>
            <person name="Conrad A."/>
            <person name="Hornischer K."/>
            <person name="Kauer G."/>
            <person name="Loehnert T.-H."/>
            <person name="Nordsiek G."/>
            <person name="Reichelt J."/>
            <person name="Scharfe M."/>
            <person name="Schoen O."/>
            <person name="Bargues M."/>
            <person name="Terol J."/>
            <person name="Climent J."/>
            <person name="Navarro P."/>
            <person name="Collado C."/>
            <person name="Perez-Perez A."/>
            <person name="Ottenwaelder B."/>
            <person name="Duchemin D."/>
            <person name="Cooke R."/>
            <person name="Laudie M."/>
            <person name="Berger-Llauro C."/>
            <person name="Purnelle B."/>
            <person name="Masuy D."/>
            <person name="de Haan M."/>
            <person name="Maarse A.C."/>
            <person name="Alcaraz J.-P."/>
            <person name="Cottet A."/>
            <person name="Casacuberta E."/>
            <person name="Monfort A."/>
            <person name="Argiriou A."/>
            <person name="Flores M."/>
            <person name="Liguori R."/>
            <person name="Vitale D."/>
            <person name="Mannhaupt G."/>
            <person name="Haase D."/>
            <person name="Schoof H."/>
            <person name="Rudd S."/>
            <person name="Zaccaria P."/>
            <person name="Mewes H.-W."/>
            <person name="Mayer K.F.X."/>
            <person name="Kaul S."/>
            <person name="Town C.D."/>
            <person name="Koo H.L."/>
            <person name="Tallon L.J."/>
            <person name="Jenkins J."/>
            <person name="Rooney T."/>
            <person name="Rizzo M."/>
            <person name="Walts A."/>
            <person name="Utterback T."/>
            <person name="Fujii C.Y."/>
            <person name="Shea T.P."/>
            <person name="Creasy T.H."/>
            <person name="Haas B."/>
            <person name="Maiti R."/>
            <person name="Wu D."/>
            <person name="Peterson J."/>
            <person name="Van Aken S."/>
            <person name="Pai G."/>
            <person name="Militscher J."/>
            <person name="Sellers P."/>
            <person name="Gill J.E."/>
            <person name="Feldblyum T.V."/>
            <person name="Preuss D."/>
            <person name="Lin X."/>
            <person name="Nierman W.C."/>
            <person name="Salzberg S.L."/>
            <person name="White O."/>
            <person name="Venter J.C."/>
            <person name="Fraser C.M."/>
            <person name="Kaneko T."/>
            <person name="Nakamura Y."/>
            <person name="Sato S."/>
            <person name="Kato T."/>
            <person name="Asamizu E."/>
            <person name="Sasamoto S."/>
            <person name="Kimura T."/>
            <person name="Idesawa K."/>
            <person name="Kawashima K."/>
            <person name="Kishida Y."/>
            <person name="Kiyokawa C."/>
            <person name="Kohara M."/>
            <person name="Matsumoto M."/>
            <person name="Matsuno A."/>
            <person name="Muraki A."/>
            <person name="Nakayama S."/>
            <person name="Nakazaki N."/>
            <person name="Shinpo S."/>
            <person name="Takeuchi C."/>
            <person name="Wada T."/>
            <person name="Watanabe A."/>
            <person name="Yamada M."/>
            <person name="Yasuda M."/>
            <person name="Tabata S."/>
        </authorList>
    </citation>
    <scope>NUCLEOTIDE SEQUENCE [LARGE SCALE GENOMIC DNA]</scope>
    <source>
        <strain>cv. Columbia</strain>
    </source>
</reference>
<reference key="2">
    <citation type="journal article" date="2017" name="Plant J.">
        <title>Araport11: a complete reannotation of the Arabidopsis thaliana reference genome.</title>
        <authorList>
            <person name="Cheng C.Y."/>
            <person name="Krishnakumar V."/>
            <person name="Chan A.P."/>
            <person name="Thibaud-Nissen F."/>
            <person name="Schobel S."/>
            <person name="Town C.D."/>
        </authorList>
    </citation>
    <scope>GENOME REANNOTATION</scope>
    <source>
        <strain>cv. Columbia</strain>
    </source>
</reference>
<reference key="3">
    <citation type="journal article" date="2007" name="Funct. Integr. Genomics">
        <title>The endo-beta-mannanase gene families in Arabidopsis, rice, and poplar.</title>
        <authorList>
            <person name="Yuan J.S."/>
            <person name="Yang X."/>
            <person name="Lai J."/>
            <person name="Lin H."/>
            <person name="Cheng Z.-M."/>
            <person name="Nonogaki H."/>
            <person name="Chen F."/>
        </authorList>
    </citation>
    <scope>GENE FAMILY</scope>
    <scope>TISSUE SPECIFICITY</scope>
</reference>
<organism>
    <name type="scientific">Arabidopsis thaliana</name>
    <name type="common">Mouse-ear cress</name>
    <dbReference type="NCBI Taxonomy" id="3702"/>
    <lineage>
        <taxon>Eukaryota</taxon>
        <taxon>Viridiplantae</taxon>
        <taxon>Streptophyta</taxon>
        <taxon>Embryophyta</taxon>
        <taxon>Tracheophyta</taxon>
        <taxon>Spermatophyta</taxon>
        <taxon>Magnoliopsida</taxon>
        <taxon>eudicotyledons</taxon>
        <taxon>Gunneridae</taxon>
        <taxon>Pentapetalae</taxon>
        <taxon>rosids</taxon>
        <taxon>malvids</taxon>
        <taxon>Brassicales</taxon>
        <taxon>Brassicaceae</taxon>
        <taxon>Camelineae</taxon>
        <taxon>Arabidopsis</taxon>
    </lineage>
</organism>